<protein>
    <recommendedName>
        <fullName evidence="1">Segregation and condensation protein A</fullName>
    </recommendedName>
</protein>
<keyword id="KW-0131">Cell cycle</keyword>
<keyword id="KW-0132">Cell division</keyword>
<keyword id="KW-0159">Chromosome partition</keyword>
<keyword id="KW-0963">Cytoplasm</keyword>
<reference key="1">
    <citation type="journal article" date="2003" name="Genome Res.">
        <title>Genome sequence of an M3 strain of Streptococcus pyogenes reveals a large-scale genomic rearrangement in invasive strains and new insights into phage evolution.</title>
        <authorList>
            <person name="Nakagawa I."/>
            <person name="Kurokawa K."/>
            <person name="Yamashita A."/>
            <person name="Nakata M."/>
            <person name="Tomiyasu Y."/>
            <person name="Okahashi N."/>
            <person name="Kawabata S."/>
            <person name="Yamazaki K."/>
            <person name="Shiba T."/>
            <person name="Yasunaga T."/>
            <person name="Hayashi H."/>
            <person name="Hattori M."/>
            <person name="Hamada S."/>
        </authorList>
    </citation>
    <scope>NUCLEOTIDE SEQUENCE [LARGE SCALE GENOMIC DNA]</scope>
    <source>
        <strain>SSI-1</strain>
    </source>
</reference>
<sequence length="234" mass="27379">MDIKLKDFEGPLDLLLHLVSQYKVDIYEVPIVEVIEQYLNYIETLQVMKLEVAGDYMLMASQLMLIKSRRLLPKVVEHIEEEDLEQDLLEKIEEYSRFKAVSQALAKQHDQRAKWYSKPKQELIFEDAILQEDKTVMDLFLAFSNIMAAKRAVLKNNHTVIERDDYKIEDMMASIKQRLEKENVISLSAIFEECQTLNEVISIFLASLELIKLHVVFVEQLSNFGAIILRKEKK</sequence>
<dbReference type="EMBL" id="BA000034">
    <property type="protein sequence ID" value="BAC64687.1"/>
    <property type="molecule type" value="Genomic_DNA"/>
</dbReference>
<dbReference type="RefSeq" id="WP_002985896.1">
    <property type="nucleotide sequence ID" value="NC_004606.1"/>
</dbReference>
<dbReference type="SMR" id="P0DF63"/>
<dbReference type="KEGG" id="sps:SPs1592"/>
<dbReference type="HOGENOM" id="CLU_038686_3_3_9"/>
<dbReference type="GO" id="GO:0005737">
    <property type="term" value="C:cytoplasm"/>
    <property type="evidence" value="ECO:0007669"/>
    <property type="project" value="UniProtKB-SubCell"/>
</dbReference>
<dbReference type="GO" id="GO:0051301">
    <property type="term" value="P:cell division"/>
    <property type="evidence" value="ECO:0007669"/>
    <property type="project" value="UniProtKB-KW"/>
</dbReference>
<dbReference type="GO" id="GO:0007059">
    <property type="term" value="P:chromosome segregation"/>
    <property type="evidence" value="ECO:0007669"/>
    <property type="project" value="UniProtKB-UniRule"/>
</dbReference>
<dbReference type="GO" id="GO:0006260">
    <property type="term" value="P:DNA replication"/>
    <property type="evidence" value="ECO:0007669"/>
    <property type="project" value="UniProtKB-UniRule"/>
</dbReference>
<dbReference type="Gene3D" id="6.10.250.2410">
    <property type="match status" value="1"/>
</dbReference>
<dbReference type="HAMAP" id="MF_01805">
    <property type="entry name" value="ScpA"/>
    <property type="match status" value="1"/>
</dbReference>
<dbReference type="InterPro" id="IPR003768">
    <property type="entry name" value="ScpA"/>
</dbReference>
<dbReference type="NCBIfam" id="NF000993">
    <property type="entry name" value="PRK00104.1-2"/>
    <property type="match status" value="1"/>
</dbReference>
<dbReference type="PANTHER" id="PTHR33969">
    <property type="entry name" value="SEGREGATION AND CONDENSATION PROTEIN A"/>
    <property type="match status" value="1"/>
</dbReference>
<dbReference type="PANTHER" id="PTHR33969:SF2">
    <property type="entry name" value="SEGREGATION AND CONDENSATION PROTEIN A"/>
    <property type="match status" value="1"/>
</dbReference>
<dbReference type="Pfam" id="PF02616">
    <property type="entry name" value="SMC_ScpA"/>
    <property type="match status" value="1"/>
</dbReference>
<comment type="function">
    <text evidence="1">Participates in chromosomal partition during cell division. May act via the formation of a condensin-like complex containing Smc and ScpB that pull DNA away from mid-cell into both cell halves.</text>
</comment>
<comment type="subunit">
    <text evidence="1">Component of a cohesin-like complex composed of ScpA, ScpB and the Smc homodimer, in which ScpA and ScpB bind to the head domain of Smc. The presence of the three proteins is required for the association of the complex with DNA.</text>
</comment>
<comment type="subcellular location">
    <subcellularLocation>
        <location evidence="1">Cytoplasm</location>
    </subcellularLocation>
    <text evidence="1">Associated with two foci at the outer edges of the nucleoid region in young cells, and at four foci within both cell halves in older cells.</text>
</comment>
<comment type="similarity">
    <text evidence="1">Belongs to the ScpA family.</text>
</comment>
<organism>
    <name type="scientific">Streptococcus pyogenes serotype M3 (strain SSI-1)</name>
    <dbReference type="NCBI Taxonomy" id="193567"/>
    <lineage>
        <taxon>Bacteria</taxon>
        <taxon>Bacillati</taxon>
        <taxon>Bacillota</taxon>
        <taxon>Bacilli</taxon>
        <taxon>Lactobacillales</taxon>
        <taxon>Streptococcaceae</taxon>
        <taxon>Streptococcus</taxon>
    </lineage>
</organism>
<proteinExistence type="inferred from homology"/>
<evidence type="ECO:0000255" key="1">
    <source>
        <dbReference type="HAMAP-Rule" id="MF_01805"/>
    </source>
</evidence>
<gene>
    <name evidence="1" type="primary">scpA</name>
    <name type="ordered locus">SPs1592</name>
</gene>
<feature type="chain" id="PRO_0000411571" description="Segregation and condensation protein A">
    <location>
        <begin position="1"/>
        <end position="234"/>
    </location>
</feature>
<accession>P0DF63</accession>
<accession>Q8K8I5</accession>
<name>SCPA_STRPQ</name>